<dbReference type="EMBL" id="M80959">
    <property type="protein sequence ID" value="AAC35577.1"/>
    <property type="molecule type" value="Genomic_RNA"/>
</dbReference>
<dbReference type="EMBL" id="CY014698">
    <property type="protein sequence ID" value="ABI84571.1"/>
    <property type="molecule type" value="Genomic_RNA"/>
</dbReference>
<dbReference type="EMBL" id="U96737">
    <property type="protein sequence ID" value="AAB93933.1"/>
    <property type="molecule type" value="Genomic_RNA"/>
</dbReference>
<dbReference type="SMR" id="Q76UX6"/>
<dbReference type="Proteomes" id="UP000000828">
    <property type="component" value="Genome"/>
</dbReference>
<dbReference type="GO" id="GO:0030430">
    <property type="term" value="C:host cell cytoplasm"/>
    <property type="evidence" value="ECO:0007669"/>
    <property type="project" value="UniProtKB-SubCell"/>
</dbReference>
<dbReference type="GO" id="GO:0042025">
    <property type="term" value="C:host cell nucleus"/>
    <property type="evidence" value="ECO:0007669"/>
    <property type="project" value="UniProtKB-SubCell"/>
</dbReference>
<dbReference type="GO" id="GO:0030291">
    <property type="term" value="F:protein serine/threonine kinase inhibitor activity"/>
    <property type="evidence" value="ECO:0007669"/>
    <property type="project" value="UniProtKB-KW"/>
</dbReference>
<dbReference type="GO" id="GO:0003723">
    <property type="term" value="F:RNA binding"/>
    <property type="evidence" value="ECO:0007669"/>
    <property type="project" value="UniProtKB-KW"/>
</dbReference>
<dbReference type="GO" id="GO:0039540">
    <property type="term" value="P:symbiont-mediated suppression of host cytoplasmic pattern recognition receptor signaling pathway via inhibition of RIG-I activity"/>
    <property type="evidence" value="ECO:0007669"/>
    <property type="project" value="UniProtKB-KW"/>
</dbReference>
<dbReference type="GO" id="GO:0039657">
    <property type="term" value="P:symbiont-mediated suppression of host gene expression"/>
    <property type="evidence" value="ECO:0007669"/>
    <property type="project" value="UniProtKB-KW"/>
</dbReference>
<dbReference type="GO" id="GO:0039524">
    <property type="term" value="P:symbiont-mediated suppression of host mRNA processing"/>
    <property type="evidence" value="ECO:0007669"/>
    <property type="project" value="UniProtKB-KW"/>
</dbReference>
<dbReference type="GO" id="GO:0039580">
    <property type="term" value="P:symbiont-mediated suppression of host PKR/eIFalpha signaling"/>
    <property type="evidence" value="ECO:0007669"/>
    <property type="project" value="UniProtKB-KW"/>
</dbReference>
<dbReference type="GO" id="GO:0039502">
    <property type="term" value="P:symbiont-mediated suppression of host type I interferon-mediated signaling pathway"/>
    <property type="evidence" value="ECO:0007669"/>
    <property type="project" value="UniProtKB-KW"/>
</dbReference>
<dbReference type="FunFam" id="1.10.287.10:FF:000001">
    <property type="entry name" value="Non-structural protein 1"/>
    <property type="match status" value="1"/>
</dbReference>
<dbReference type="FunFam" id="3.30.420.330:FF:000001">
    <property type="entry name" value="Non-structural protein 1"/>
    <property type="match status" value="1"/>
</dbReference>
<dbReference type="Gene3D" id="3.30.420.330">
    <property type="entry name" value="Influenza virus non-structural protein, effector domain"/>
    <property type="match status" value="1"/>
</dbReference>
<dbReference type="Gene3D" id="1.10.287.10">
    <property type="entry name" value="S15/NS1, RNA-binding"/>
    <property type="match status" value="1"/>
</dbReference>
<dbReference type="HAMAP" id="MF_04066">
    <property type="entry name" value="INFV_NS1"/>
    <property type="match status" value="1"/>
</dbReference>
<dbReference type="InterPro" id="IPR004208">
    <property type="entry name" value="NS1"/>
</dbReference>
<dbReference type="InterPro" id="IPR000256">
    <property type="entry name" value="NS1A"/>
</dbReference>
<dbReference type="InterPro" id="IPR038064">
    <property type="entry name" value="NS1A_effect_dom-like_sf"/>
</dbReference>
<dbReference type="InterPro" id="IPR009068">
    <property type="entry name" value="uS15_NS1_RNA-bd_sf"/>
</dbReference>
<dbReference type="Pfam" id="PF00600">
    <property type="entry name" value="Flu_NS1"/>
    <property type="match status" value="1"/>
</dbReference>
<dbReference type="SUPFAM" id="SSF143021">
    <property type="entry name" value="Ns1 effector domain-like"/>
    <property type="match status" value="1"/>
</dbReference>
<dbReference type="SUPFAM" id="SSF47060">
    <property type="entry name" value="S15/NS1 RNA-binding domain"/>
    <property type="match status" value="1"/>
</dbReference>
<proteinExistence type="inferred from homology"/>
<reference key="1">
    <citation type="journal article" date="1998" name="Virus Res.">
        <title>Influence of host species on the evolution of the nonstructural (NS) gene of influenza A viruses.</title>
        <authorList>
            <person name="Kawaoka Y."/>
            <person name="Gorman O.T."/>
            <person name="Ito T."/>
            <person name="Wells K."/>
            <person name="Donis R.O."/>
            <person name="Castrucci M.R."/>
            <person name="Donatelli I."/>
            <person name="Webster R.G."/>
        </authorList>
    </citation>
    <scope>NUCLEOTIDE SEQUENCE [GENOMIC RNA]</scope>
</reference>
<reference key="2">
    <citation type="journal article" date="2006" name="Science">
        <title>Large-scale sequence analysis of avian influenza isolates.</title>
        <authorList>
            <person name="Obenauer J.C."/>
            <person name="Denson J."/>
            <person name="Mehta P.K."/>
            <person name="Su X."/>
            <person name="Mukatira S."/>
            <person name="Finkelstein D.B."/>
            <person name="Xu X."/>
            <person name="Wang J."/>
            <person name="Ma J."/>
            <person name="Fan Y."/>
            <person name="Rakestraw K.M."/>
            <person name="Webster R.G."/>
            <person name="Hoffmann E."/>
            <person name="Krauss S."/>
            <person name="Zheng J."/>
            <person name="Zhang Z."/>
            <person name="Naeve C.W."/>
        </authorList>
    </citation>
    <scope>NUCLEOTIDE SEQUENCE [GENOMIC RNA]</scope>
</reference>
<reference key="3">
    <citation type="journal article" date="1998" name="Virus Res.">
        <title>Multiple alignment comparison of the non-structural genes of influenza A viruses.</title>
        <authorList>
            <person name="Suarez D.L."/>
            <person name="Perdue M.L."/>
        </authorList>
    </citation>
    <scope>NUCLEOTIDE SEQUENCE [GENOMIC RNA]</scope>
</reference>
<gene>
    <name evidence="1" type="primary">NS</name>
</gene>
<sequence length="230" mass="25822">MDSNTVSSFQVDCFLWHVRKRFADQEMGDAPFLDRIRRDQKSLKGRSITLGIDIEAATRAGKLIIERILDEESDEALKMNIASVPASRYVTDMTPEEMSRDWFMLMPKQKFAGPLCIRMDQAILDKNIVLKANFSVAFDRLETLILLRAFTSEGAIVGEISQLPSLPGHTSEDVKNAIGILIGGLEWNDNTVRVSETLQRFAWGSSNENGRPPFAPKQERKMAGTVESEV</sequence>
<accession>Q76UX6</accession>
<accession>Q76R99</accession>
<feature type="chain" id="PRO_0000324259" description="Non-structural protein 1">
    <location>
        <begin position="1"/>
        <end position="230"/>
    </location>
</feature>
<feature type="region of interest" description="RNA-binding and homodimerization" evidence="1">
    <location>
        <begin position="1"/>
        <end position="73"/>
    </location>
</feature>
<feature type="region of interest" description="CPSF4-binding" evidence="1">
    <location>
        <begin position="180"/>
        <end position="215"/>
    </location>
</feature>
<feature type="region of interest" description="Disordered" evidence="2">
    <location>
        <begin position="204"/>
        <end position="230"/>
    </location>
</feature>
<feature type="region of interest" description="PABPN1-binding" evidence="1">
    <location>
        <begin position="223"/>
        <end position="230"/>
    </location>
</feature>
<feature type="short sequence motif" description="Nuclear localization signal" evidence="1">
    <location>
        <begin position="34"/>
        <end position="38"/>
    </location>
</feature>
<feature type="short sequence motif" description="Nuclear export signal" evidence="1">
    <location>
        <begin position="137"/>
        <end position="146"/>
    </location>
</feature>
<organismHost>
    <name type="scientific">Aves</name>
    <dbReference type="NCBI Taxonomy" id="8782"/>
</organismHost>
<comment type="function">
    <text evidence="1">Inhibits post-transcriptional processing of cellular pre-mRNA, by binding and inhibiting two cellular proteins that are required for the 3'-end processing of cellular pre-mRNAs: the 30 kDa cleavage and polyadenylation specificity factor/CPSF4 and the poly(A)-binding protein 2/PABPN1. In turn, unprocessed 3' end pre-mRNAs accumulate in the host nucleus and are no longer exported to the cytoplasm. Cellular protein synthesis is thereby shut off very early after virus infection. Viral protein synthesis is not affected by the inhibition of the cellular 3' end processing machinery because the poly(A) tails of viral mRNAs are produced by the viral polymerase through a stuttering mechanism. Prevents the establishment of the cellular antiviral state by inhibiting TRIM25-mediated RIGI ubiquitination, which normally triggers the antiviral transduction signal that leads to the activation of type I IFN genes by transcription factors IRF3 and IRF7. Also binds poly(A) and U6 snRNA. Inhibits the integrated stress response (ISR) in the infected cell by blocking dsRNA binding by EIF2AK2/PKR and further phosphorylation of EIF2S1/EIF-2ALPHA. Stress granule formation is thus inhibited, which allows protein synthesis and viral replication.</text>
</comment>
<comment type="subunit">
    <text evidence="1">Homodimer. Interacts with host TRIM25 (via coiled coil); this interaction specifically inhibits TRIM25 multimerization and TRIM25-mediated RIGI CARD ubiquitination. Interacts with human EIF2AK2/PKR, CPSF4, IVNS1ABP and PABPN1.</text>
</comment>
<comment type="subcellular location">
    <subcellularLocation>
        <location evidence="1">Host nucleus</location>
    </subcellularLocation>
    <subcellularLocation>
        <location evidence="1">Host cytoplasm</location>
    </subcellularLocation>
    <text evidence="1">In uninfected, transfected cells, NS1 is localized in the nucleus. Only in virus infected cells, the nuclear export signal is unveiled, presumably by a viral protein, and a fraction of NS1 is exported in the cytoplasm.</text>
</comment>
<comment type="alternative products">
    <event type="alternative splicing"/>
    <isoform>
        <id>Q76UX6-1</id>
        <name>NS1</name>
        <sequence type="displayed"/>
    </isoform>
    <isoform>
        <id>P69264-1</id>
        <name>NEP</name>
        <name>NS2</name>
        <sequence type="external"/>
    </isoform>
</comment>
<comment type="domain">
    <text evidence="1">The dsRNA-binding region is required for suppression of RNA silencing.</text>
</comment>
<comment type="PTM">
    <text evidence="1">Upon interferon induction, ISGylated via host HERC5; this results in the impairment of NS1 interaction with RNA targets due to its inability to form homodimers and to interact with host EIF2AK2/PKR.</text>
</comment>
<comment type="similarity">
    <text evidence="1">Belongs to the influenza A viruses NS1 family.</text>
</comment>
<name>NS1_I77AF</name>
<organism>
    <name type="scientific">Influenza A virus (strain A/Gull/Maryland/704/1977 H13N6)</name>
    <dbReference type="NCBI Taxonomy" id="384499"/>
    <lineage>
        <taxon>Viruses</taxon>
        <taxon>Riboviria</taxon>
        <taxon>Orthornavirae</taxon>
        <taxon>Negarnaviricota</taxon>
        <taxon>Polyploviricotina</taxon>
        <taxon>Insthoviricetes</taxon>
        <taxon>Articulavirales</taxon>
        <taxon>Orthomyxoviridae</taxon>
        <taxon>Alphainfluenzavirus</taxon>
        <taxon>Alphainfluenzavirus influenzae</taxon>
        <taxon>Influenza A virus</taxon>
    </lineage>
</organism>
<protein>
    <recommendedName>
        <fullName evidence="1">Non-structural protein 1</fullName>
        <shortName evidence="1">NS1</shortName>
    </recommendedName>
    <alternativeName>
        <fullName evidence="1">NS1A</fullName>
    </alternativeName>
</protein>
<evidence type="ECO:0000255" key="1">
    <source>
        <dbReference type="HAMAP-Rule" id="MF_04066"/>
    </source>
</evidence>
<evidence type="ECO:0000256" key="2">
    <source>
        <dbReference type="SAM" id="MobiDB-lite"/>
    </source>
</evidence>
<keyword id="KW-0025">Alternative splicing</keyword>
<keyword id="KW-1262">Eukaryotic host gene expression shutoff by virus</keyword>
<keyword id="KW-1035">Host cytoplasm</keyword>
<keyword id="KW-1190">Host gene expression shutoff by virus</keyword>
<keyword id="KW-1192">Host mRNA suppression by virus</keyword>
<keyword id="KW-1048">Host nucleus</keyword>
<keyword id="KW-0945">Host-virus interaction</keyword>
<keyword id="KW-1090">Inhibition of host innate immune response by virus</keyword>
<keyword id="KW-1114">Inhibition of host interferon signaling pathway by virus</keyword>
<keyword id="KW-1102">Inhibition of host PKR by virus</keyword>
<keyword id="KW-1103">Inhibition of host pre-mRNA processing by virus</keyword>
<keyword id="KW-1088">Inhibition of host RIG-I by virus</keyword>
<keyword id="KW-1113">Inhibition of host RLR pathway by virus</keyword>
<keyword id="KW-0922">Interferon antiviral system evasion</keyword>
<keyword id="KW-0694">RNA-binding</keyword>
<keyword id="KW-0832">Ubl conjugation</keyword>
<keyword id="KW-0899">Viral immunoevasion</keyword>